<proteinExistence type="evidence at protein level"/>
<dbReference type="EMBL" id="AF114436">
    <property type="protein sequence ID" value="AAF08347.1"/>
    <property type="molecule type" value="Genomic_DNA"/>
</dbReference>
<dbReference type="EMBL" id="AF114431">
    <property type="protein sequence ID" value="AAF08347.1"/>
    <property type="status" value="JOINED"/>
    <property type="molecule type" value="Genomic_DNA"/>
</dbReference>
<dbReference type="EMBL" id="AF114432">
    <property type="protein sequence ID" value="AAF08347.1"/>
    <property type="status" value="JOINED"/>
    <property type="molecule type" value="Genomic_DNA"/>
</dbReference>
<dbReference type="EMBL" id="AF114433">
    <property type="protein sequence ID" value="AAF08347.1"/>
    <property type="status" value="JOINED"/>
    <property type="molecule type" value="Genomic_DNA"/>
</dbReference>
<dbReference type="EMBL" id="AF114434">
    <property type="protein sequence ID" value="AAF08347.1"/>
    <property type="status" value="JOINED"/>
    <property type="molecule type" value="Genomic_DNA"/>
</dbReference>
<dbReference type="EMBL" id="AF114435">
    <property type="protein sequence ID" value="AAF08347.1"/>
    <property type="status" value="JOINED"/>
    <property type="molecule type" value="Genomic_DNA"/>
</dbReference>
<dbReference type="EMBL" id="AF114430">
    <property type="protein sequence ID" value="AAF08345.1"/>
    <property type="molecule type" value="mRNA"/>
</dbReference>
<dbReference type="EMBL" id="AF151638">
    <property type="protein sequence ID" value="AAF02536.1"/>
    <property type="molecule type" value="mRNA"/>
</dbReference>
<dbReference type="EMBL" id="AC009837">
    <property type="status" value="NOT_ANNOTATED_CDS"/>
    <property type="molecule type" value="Genomic_DNA"/>
</dbReference>
<dbReference type="EMBL" id="AC091155">
    <property type="status" value="NOT_ANNOTATED_CDS"/>
    <property type="molecule type" value="Genomic_DNA"/>
</dbReference>
<dbReference type="EMBL" id="BC005112">
    <property type="protein sequence ID" value="AAH05112.1"/>
    <property type="status" value="ALT_INIT"/>
    <property type="molecule type" value="mRNA"/>
</dbReference>
<dbReference type="EMBL" id="BC012084">
    <property type="protein sequence ID" value="AAH12084.1"/>
    <property type="molecule type" value="mRNA"/>
</dbReference>
<dbReference type="CCDS" id="CCDS11588.1">
    <molecule id="Q9UKL6-1"/>
</dbReference>
<dbReference type="CCDS" id="CCDS45741.1">
    <molecule id="Q9UKL6-2"/>
</dbReference>
<dbReference type="RefSeq" id="NP_001095872.1">
    <molecule id="Q9UKL6-2"/>
    <property type="nucleotide sequence ID" value="NM_001102402.3"/>
</dbReference>
<dbReference type="RefSeq" id="NP_001317307.1">
    <property type="nucleotide sequence ID" value="NM_001330378.1"/>
</dbReference>
<dbReference type="RefSeq" id="NP_067036.2">
    <molecule id="Q9UKL6-1"/>
    <property type="nucleotide sequence ID" value="NM_021213.4"/>
</dbReference>
<dbReference type="PDB" id="1LN1">
    <property type="method" value="X-ray"/>
    <property type="resolution" value="2.40 A"/>
    <property type="chains" value="A=1-214"/>
</dbReference>
<dbReference type="PDB" id="1LN2">
    <property type="method" value="X-ray"/>
    <property type="resolution" value="2.90 A"/>
    <property type="chains" value="A/B=1-214"/>
</dbReference>
<dbReference type="PDB" id="1LN3">
    <property type="method" value="X-ray"/>
    <property type="resolution" value="2.90 A"/>
    <property type="chains" value="A/B=1-214"/>
</dbReference>
<dbReference type="PDB" id="7U9D">
    <property type="method" value="X-ray"/>
    <property type="resolution" value="2.18 A"/>
    <property type="chains" value="A=1-214"/>
</dbReference>
<dbReference type="PDBsum" id="1LN1"/>
<dbReference type="PDBsum" id="1LN2"/>
<dbReference type="PDBsum" id="1LN3"/>
<dbReference type="PDBsum" id="7U9D"/>
<dbReference type="SMR" id="Q9UKL6"/>
<dbReference type="BioGRID" id="121818">
    <property type="interactions" value="12"/>
</dbReference>
<dbReference type="FunCoup" id="Q9UKL6">
    <property type="interactions" value="536"/>
</dbReference>
<dbReference type="IntAct" id="Q9UKL6">
    <property type="interactions" value="7"/>
</dbReference>
<dbReference type="STRING" id="9606.ENSP00000460437"/>
<dbReference type="ChEMBL" id="CHEMBL4523490"/>
<dbReference type="DrugBank" id="DB04372">
    <property type="generic name" value="L-Dilinoleoyllecithin"/>
</dbReference>
<dbReference type="DrugBank" id="DB09568">
    <property type="generic name" value="Omega-3-carboxylic acids"/>
</dbReference>
<dbReference type="DrugBank" id="DB02306">
    <property type="generic name" value="Palmitoyl-Linoleoyl Phosphatidylcholine"/>
</dbReference>
<dbReference type="SwissLipids" id="SLP:000001541"/>
<dbReference type="iPTMnet" id="Q9UKL6"/>
<dbReference type="MetOSite" id="Q9UKL6"/>
<dbReference type="PhosphoSitePlus" id="Q9UKL6"/>
<dbReference type="BioMuta" id="PCTP"/>
<dbReference type="DMDM" id="15214192"/>
<dbReference type="jPOST" id="Q9UKL6"/>
<dbReference type="MassIVE" id="Q9UKL6"/>
<dbReference type="PaxDb" id="9606-ENSP00000268896"/>
<dbReference type="PeptideAtlas" id="Q9UKL6"/>
<dbReference type="ProteomicsDB" id="84818">
    <molecule id="Q9UKL6-1"/>
</dbReference>
<dbReference type="ProteomicsDB" id="84819">
    <molecule id="Q9UKL6-2"/>
</dbReference>
<dbReference type="Pumba" id="Q9UKL6"/>
<dbReference type="Antibodypedia" id="30858">
    <property type="antibodies" value="200 antibodies from 22 providers"/>
</dbReference>
<dbReference type="DNASU" id="58488"/>
<dbReference type="Ensembl" id="ENST00000268896.10">
    <molecule id="Q9UKL6-1"/>
    <property type="protein sequence ID" value="ENSP00000268896.4"/>
    <property type="gene ID" value="ENSG00000141179.14"/>
</dbReference>
<dbReference type="Ensembl" id="ENST00000325214.10">
    <molecule id="Q9UKL6-2"/>
    <property type="protein sequence ID" value="ENSP00000325181.5"/>
    <property type="gene ID" value="ENSG00000141179.14"/>
</dbReference>
<dbReference type="GeneID" id="58488"/>
<dbReference type="KEGG" id="hsa:58488"/>
<dbReference type="MANE-Select" id="ENST00000268896.10">
    <property type="protein sequence ID" value="ENSP00000268896.4"/>
    <property type="RefSeq nucleotide sequence ID" value="NM_021213.4"/>
    <property type="RefSeq protein sequence ID" value="NP_067036.2"/>
</dbReference>
<dbReference type="UCSC" id="uc002iul.5">
    <molecule id="Q9UKL6-1"/>
    <property type="organism name" value="human"/>
</dbReference>
<dbReference type="AGR" id="HGNC:8752"/>
<dbReference type="CTD" id="58488"/>
<dbReference type="DisGeNET" id="58488"/>
<dbReference type="GeneCards" id="PCTP"/>
<dbReference type="HGNC" id="HGNC:8752">
    <property type="gene designation" value="PCTP"/>
</dbReference>
<dbReference type="HPA" id="ENSG00000141179">
    <property type="expression patterns" value="Tissue enhanced (liver)"/>
</dbReference>
<dbReference type="MIM" id="606055">
    <property type="type" value="gene"/>
</dbReference>
<dbReference type="neXtProt" id="NX_Q9UKL6"/>
<dbReference type="OpenTargets" id="ENSG00000141179"/>
<dbReference type="PharmGKB" id="PA33098"/>
<dbReference type="VEuPathDB" id="HostDB:ENSG00000141179"/>
<dbReference type="eggNOG" id="KOG2761">
    <property type="taxonomic scope" value="Eukaryota"/>
</dbReference>
<dbReference type="GeneTree" id="ENSGT00940000156843"/>
<dbReference type="HOGENOM" id="CLU_042209_1_0_1"/>
<dbReference type="InParanoid" id="Q9UKL6"/>
<dbReference type="OMA" id="DYVYMRE"/>
<dbReference type="OrthoDB" id="1295045at2759"/>
<dbReference type="PAN-GO" id="Q9UKL6">
    <property type="GO annotations" value="2 GO annotations based on evolutionary models"/>
</dbReference>
<dbReference type="PhylomeDB" id="Q9UKL6"/>
<dbReference type="TreeFam" id="TF320705"/>
<dbReference type="PathwayCommons" id="Q9UKL6"/>
<dbReference type="Reactome" id="R-HSA-1483191">
    <property type="pathway name" value="Synthesis of PC"/>
</dbReference>
<dbReference type="Reactome" id="R-HSA-77289">
    <property type="pathway name" value="Mitochondrial Fatty Acid Beta-Oxidation"/>
</dbReference>
<dbReference type="SignaLink" id="Q9UKL6"/>
<dbReference type="BioGRID-ORCS" id="58488">
    <property type="hits" value="20 hits in 1160 CRISPR screens"/>
</dbReference>
<dbReference type="ChiTaRS" id="PCTP">
    <property type="organism name" value="human"/>
</dbReference>
<dbReference type="EvolutionaryTrace" id="Q9UKL6"/>
<dbReference type="GeneWiki" id="Phosphatidylcholine_transfer_protein"/>
<dbReference type="GenomeRNAi" id="58488"/>
<dbReference type="Pharos" id="Q9UKL6">
    <property type="development level" value="Tbio"/>
</dbReference>
<dbReference type="PRO" id="PR:Q9UKL6"/>
<dbReference type="Proteomes" id="UP000005640">
    <property type="component" value="Chromosome 17"/>
</dbReference>
<dbReference type="RNAct" id="Q9UKL6">
    <property type="molecule type" value="protein"/>
</dbReference>
<dbReference type="Bgee" id="ENSG00000141179">
    <property type="expression patterns" value="Expressed in secondary oocyte and 174 other cell types or tissues"/>
</dbReference>
<dbReference type="ExpressionAtlas" id="Q9UKL6">
    <property type="expression patterns" value="baseline and differential"/>
</dbReference>
<dbReference type="GO" id="GO:0005829">
    <property type="term" value="C:cytosol"/>
    <property type="evidence" value="ECO:0000304"/>
    <property type="project" value="UniProtKB"/>
</dbReference>
<dbReference type="GO" id="GO:0031210">
    <property type="term" value="F:phosphatidylcholine binding"/>
    <property type="evidence" value="ECO:0000314"/>
    <property type="project" value="UniProtKB"/>
</dbReference>
<dbReference type="GO" id="GO:0008525">
    <property type="term" value="F:phosphatidylcholine transporter activity"/>
    <property type="evidence" value="ECO:0000314"/>
    <property type="project" value="UniProtKB"/>
</dbReference>
<dbReference type="GO" id="GO:0006869">
    <property type="term" value="P:lipid transport"/>
    <property type="evidence" value="ECO:0000303"/>
    <property type="project" value="UniProtKB"/>
</dbReference>
<dbReference type="GO" id="GO:0120163">
    <property type="term" value="P:negative regulation of cold-induced thermogenesis"/>
    <property type="evidence" value="ECO:0000250"/>
    <property type="project" value="YuBioLab"/>
</dbReference>
<dbReference type="GO" id="GO:0015914">
    <property type="term" value="P:phospholipid transport"/>
    <property type="evidence" value="ECO:0000314"/>
    <property type="project" value="UniProtKB"/>
</dbReference>
<dbReference type="CDD" id="cd08910">
    <property type="entry name" value="START_STARD2-like"/>
    <property type="match status" value="1"/>
</dbReference>
<dbReference type="FunFam" id="3.30.530.20:FF:000017">
    <property type="entry name" value="Phosphatidylcholine transfer protein, putative"/>
    <property type="match status" value="1"/>
</dbReference>
<dbReference type="Gene3D" id="3.30.530.20">
    <property type="match status" value="1"/>
</dbReference>
<dbReference type="InterPro" id="IPR041950">
    <property type="entry name" value="STARD2_START"/>
</dbReference>
<dbReference type="InterPro" id="IPR023393">
    <property type="entry name" value="START-like_dom_sf"/>
</dbReference>
<dbReference type="InterPro" id="IPR002913">
    <property type="entry name" value="START_lipid-bd_dom"/>
</dbReference>
<dbReference type="InterPro" id="IPR051213">
    <property type="entry name" value="START_lipid_transfer"/>
</dbReference>
<dbReference type="PANTHER" id="PTHR19308">
    <property type="entry name" value="PHOSPHATIDYLCHOLINE TRANSFER PROTEIN"/>
    <property type="match status" value="1"/>
</dbReference>
<dbReference type="PANTHER" id="PTHR19308:SF39">
    <property type="entry name" value="PHOSPHATIDYLCHOLINE TRANSFER PROTEIN"/>
    <property type="match status" value="1"/>
</dbReference>
<dbReference type="Pfam" id="PF01852">
    <property type="entry name" value="START"/>
    <property type="match status" value="1"/>
</dbReference>
<dbReference type="SMART" id="SM00234">
    <property type="entry name" value="START"/>
    <property type="match status" value="1"/>
</dbReference>
<dbReference type="SUPFAM" id="SSF55961">
    <property type="entry name" value="Bet v1-like"/>
    <property type="match status" value="1"/>
</dbReference>
<dbReference type="PROSITE" id="PS50848">
    <property type="entry name" value="START"/>
    <property type="match status" value="1"/>
</dbReference>
<feature type="chain" id="PRO_0000220658" description="Phosphatidylcholine transfer protein">
    <location>
        <begin position="1"/>
        <end position="214"/>
    </location>
</feature>
<feature type="domain" description="START" evidence="4">
    <location>
        <begin position="1"/>
        <end position="212"/>
    </location>
</feature>
<feature type="binding site">
    <location>
        <position position="72"/>
    </location>
    <ligand>
        <name>a 1,2-diacyl-sn-glycero-3-phosphocholine</name>
        <dbReference type="ChEBI" id="CHEBI:57643"/>
    </ligand>
</feature>
<feature type="binding site">
    <location>
        <position position="78"/>
    </location>
    <ligand>
        <name>a 1,2-diacyl-sn-glycero-3-phosphocholine</name>
        <dbReference type="ChEBI" id="CHEBI:57643"/>
    </ligand>
</feature>
<feature type="binding site">
    <location>
        <position position="157"/>
    </location>
    <ligand>
        <name>a 1,2-diacyl-sn-glycero-3-phosphocholine</name>
        <dbReference type="ChEBI" id="CHEBI:57643"/>
    </ligand>
</feature>
<feature type="modified residue" description="N-acetylmethionine" evidence="2">
    <location>
        <position position="1"/>
    </location>
</feature>
<feature type="modified residue" description="Phosphoserine" evidence="9">
    <location>
        <position position="139"/>
    </location>
</feature>
<feature type="splice variant" id="VSP_041363" description="In isoform 2." evidence="7">
    <location>
        <begin position="1"/>
        <end position="72"/>
    </location>
</feature>
<feature type="sequence variant" id="VAR_052070" description="In dbSNP:rs12941739.">
    <original>E</original>
    <variation>A</variation>
    <location>
        <position position="10"/>
    </location>
</feature>
<feature type="mutagenesis site" description="Reduces activity by 20%." evidence="6">
    <original>C</original>
    <variation>A</variation>
    <location>
        <position position="63"/>
    </location>
</feature>
<feature type="sequence conflict" description="In Ref. 1; AAF08347." evidence="8" ref="1">
    <original>Y</original>
    <variation>H</variation>
    <location>
        <position position="52"/>
    </location>
</feature>
<feature type="helix" evidence="11">
    <location>
        <begin position="10"/>
        <end position="16"/>
    </location>
</feature>
<feature type="helix" evidence="11">
    <location>
        <begin position="18"/>
        <end position="21"/>
    </location>
</feature>
<feature type="turn" evidence="11">
    <location>
        <begin position="26"/>
        <end position="29"/>
    </location>
</feature>
<feature type="strand" evidence="11">
    <location>
        <begin position="31"/>
        <end position="36"/>
    </location>
</feature>
<feature type="strand" evidence="11">
    <location>
        <begin position="39"/>
        <end position="45"/>
    </location>
</feature>
<feature type="turn" evidence="11">
    <location>
        <begin position="47"/>
        <end position="49"/>
    </location>
</feature>
<feature type="strand" evidence="11">
    <location>
        <begin position="52"/>
        <end position="61"/>
    </location>
</feature>
<feature type="helix" evidence="11">
    <location>
        <begin position="65"/>
        <end position="73"/>
    </location>
</feature>
<feature type="helix" evidence="11">
    <location>
        <begin position="75"/>
        <end position="81"/>
    </location>
</feature>
<feature type="strand" evidence="11">
    <location>
        <begin position="85"/>
        <end position="103"/>
    </location>
</feature>
<feature type="strand" evidence="10">
    <location>
        <begin position="107"/>
        <end position="109"/>
    </location>
</feature>
<feature type="strand" evidence="11">
    <location>
        <begin position="111"/>
        <end position="125"/>
    </location>
</feature>
<feature type="strand" evidence="11">
    <location>
        <begin position="128"/>
        <end position="137"/>
    </location>
</feature>
<feature type="strand" evidence="11">
    <location>
        <begin position="149"/>
        <end position="152"/>
    </location>
</feature>
<feature type="strand" evidence="11">
    <location>
        <begin position="154"/>
        <end position="163"/>
    </location>
</feature>
<feature type="strand" evidence="11">
    <location>
        <begin position="165"/>
        <end position="177"/>
    </location>
</feature>
<feature type="helix" evidence="11">
    <location>
        <begin position="185"/>
        <end position="193"/>
    </location>
</feature>
<feature type="helix" evidence="11">
    <location>
        <begin position="195"/>
        <end position="208"/>
    </location>
</feature>
<evidence type="ECO:0000250" key="1"/>
<evidence type="ECO:0000250" key="2">
    <source>
        <dbReference type="UniProtKB" id="P02720"/>
    </source>
</evidence>
<evidence type="ECO:0000250" key="3">
    <source>
        <dbReference type="UniProtKB" id="P53808"/>
    </source>
</evidence>
<evidence type="ECO:0000255" key="4">
    <source>
        <dbReference type="PROSITE-ProRule" id="PRU00197"/>
    </source>
</evidence>
<evidence type="ECO:0000269" key="5">
    <source>
    </source>
</evidence>
<evidence type="ECO:0000269" key="6">
    <source>
    </source>
</evidence>
<evidence type="ECO:0000303" key="7">
    <source>
    </source>
</evidence>
<evidence type="ECO:0000305" key="8"/>
<evidence type="ECO:0007744" key="9">
    <source>
    </source>
</evidence>
<evidence type="ECO:0007829" key="10">
    <source>
        <dbReference type="PDB" id="1LN2"/>
    </source>
</evidence>
<evidence type="ECO:0007829" key="11">
    <source>
        <dbReference type="PDB" id="7U9D"/>
    </source>
</evidence>
<name>PPCT_HUMAN</name>
<accession>Q9UKL6</accession>
<accession>Q9BSC9</accession>
<accession>Q9UIT3</accession>
<accession>Q9UKW7</accession>
<organism>
    <name type="scientific">Homo sapiens</name>
    <name type="common">Human</name>
    <dbReference type="NCBI Taxonomy" id="9606"/>
    <lineage>
        <taxon>Eukaryota</taxon>
        <taxon>Metazoa</taxon>
        <taxon>Chordata</taxon>
        <taxon>Craniata</taxon>
        <taxon>Vertebrata</taxon>
        <taxon>Euteleostomi</taxon>
        <taxon>Mammalia</taxon>
        <taxon>Eutheria</taxon>
        <taxon>Euarchontoglires</taxon>
        <taxon>Primates</taxon>
        <taxon>Haplorrhini</taxon>
        <taxon>Catarrhini</taxon>
        <taxon>Hominidae</taxon>
        <taxon>Homo</taxon>
    </lineage>
</organism>
<protein>
    <recommendedName>
        <fullName>Phosphatidylcholine transfer protein</fullName>
        <shortName>PC-TP</shortName>
    </recommendedName>
    <alternativeName>
        <fullName>START domain-containing protein 2</fullName>
        <shortName>StARD2</shortName>
    </alternativeName>
    <alternativeName>
        <fullName>StAR-related lipid transfer protein 2</fullName>
    </alternativeName>
</protein>
<keyword id="KW-0002">3D-structure</keyword>
<keyword id="KW-0007">Acetylation</keyword>
<keyword id="KW-0025">Alternative splicing</keyword>
<keyword id="KW-0963">Cytoplasm</keyword>
<keyword id="KW-0445">Lipid transport</keyword>
<keyword id="KW-0446">Lipid-binding</keyword>
<keyword id="KW-0597">Phosphoprotein</keyword>
<keyword id="KW-1267">Proteomics identification</keyword>
<keyword id="KW-1185">Reference proteome</keyword>
<keyword id="KW-0813">Transport</keyword>
<sequence length="214" mass="24843">MELAAGSFSEEQFWEACAELQQPALAGADWQLLVETSGISIYRLLDKKTGLYEYKVFGVLEDCSPTLLADIYMDSDYRKQWDQYVKELYEQECNGETVVYWEVKYPFPMSNRDYVYLRQRRDLDMEGRKIHVILARSTSMPQLGERSGVIRVKQYKQSLAIESDGKKGSKVFMYYFDNPGGQIPSWLINWAAKNGVPNFLKDMARACQNYLKKT</sequence>
<reference key="1">
    <citation type="journal article" date="1999" name="Biochim. Biophys. Acta">
        <title>Cloning, tissue-specific expression, gene structure and chromosomal localization of human phosphatidylcholine transfer protein.</title>
        <authorList>
            <person name="Cohen D.E."/>
            <person name="Green R.M."/>
            <person name="Wu M.K."/>
            <person name="Beier D.R."/>
        </authorList>
    </citation>
    <scope>NUCLEOTIDE SEQUENCE [GENOMIC DNA / MRNA] (ISOFORM 1)</scope>
    <scope>TISSUE SPECIFICITY</scope>
    <source>
        <tissue>Kidney</tissue>
    </source>
</reference>
<reference key="2">
    <citation type="journal article" date="1999" name="Proc. Natl. Acad. Sci. U.S.A.">
        <title>Mice without phosphatidylcholine transfer protein have no defects in the secretion of PC into bile or into the lung airspaces.</title>
        <authorList>
            <person name="van Helvoort A."/>
            <person name="de Brouwer A."/>
            <person name="Ottenhoff R."/>
            <person name="Brouwers J.F.H.M."/>
            <person name="Wijnholds J."/>
            <person name="Beijnen J.H."/>
            <person name="Rijneveld A."/>
            <person name="van der Poll T."/>
            <person name="van der Valk M.A."/>
            <person name="Majoor D."/>
            <person name="Voorhout W."/>
            <person name="Wirtz K.W.A."/>
            <person name="Oude Elferink R.P.J."/>
            <person name="Borst P."/>
        </authorList>
    </citation>
    <scope>NUCLEOTIDE SEQUENCE [MRNA] (ISOFORM 1)</scope>
    <source>
        <tissue>Uterus</tissue>
    </source>
</reference>
<reference key="3">
    <citation type="journal article" date="2006" name="Nature">
        <title>DNA sequence of human chromosome 17 and analysis of rearrangement in the human lineage.</title>
        <authorList>
            <person name="Zody M.C."/>
            <person name="Garber M."/>
            <person name="Adams D.J."/>
            <person name="Sharpe T."/>
            <person name="Harrow J."/>
            <person name="Lupski J.R."/>
            <person name="Nicholson C."/>
            <person name="Searle S.M."/>
            <person name="Wilming L."/>
            <person name="Young S.K."/>
            <person name="Abouelleil A."/>
            <person name="Allen N.R."/>
            <person name="Bi W."/>
            <person name="Bloom T."/>
            <person name="Borowsky M.L."/>
            <person name="Bugalter B.E."/>
            <person name="Butler J."/>
            <person name="Chang J.L."/>
            <person name="Chen C.-K."/>
            <person name="Cook A."/>
            <person name="Corum B."/>
            <person name="Cuomo C.A."/>
            <person name="de Jong P.J."/>
            <person name="DeCaprio D."/>
            <person name="Dewar K."/>
            <person name="FitzGerald M."/>
            <person name="Gilbert J."/>
            <person name="Gibson R."/>
            <person name="Gnerre S."/>
            <person name="Goldstein S."/>
            <person name="Grafham D.V."/>
            <person name="Grocock R."/>
            <person name="Hafez N."/>
            <person name="Hagopian D.S."/>
            <person name="Hart E."/>
            <person name="Norman C.H."/>
            <person name="Humphray S."/>
            <person name="Jaffe D.B."/>
            <person name="Jones M."/>
            <person name="Kamal M."/>
            <person name="Khodiyar V.K."/>
            <person name="LaButti K."/>
            <person name="Laird G."/>
            <person name="Lehoczky J."/>
            <person name="Liu X."/>
            <person name="Lokyitsang T."/>
            <person name="Loveland J."/>
            <person name="Lui A."/>
            <person name="Macdonald P."/>
            <person name="Major J.E."/>
            <person name="Matthews L."/>
            <person name="Mauceli E."/>
            <person name="McCarroll S.A."/>
            <person name="Mihalev A.H."/>
            <person name="Mudge J."/>
            <person name="Nguyen C."/>
            <person name="Nicol R."/>
            <person name="O'Leary S.B."/>
            <person name="Osoegawa K."/>
            <person name="Schwartz D.C."/>
            <person name="Shaw-Smith C."/>
            <person name="Stankiewicz P."/>
            <person name="Steward C."/>
            <person name="Swarbreck D."/>
            <person name="Venkataraman V."/>
            <person name="Whittaker C.A."/>
            <person name="Yang X."/>
            <person name="Zimmer A.R."/>
            <person name="Bradley A."/>
            <person name="Hubbard T."/>
            <person name="Birren B.W."/>
            <person name="Rogers J."/>
            <person name="Lander E.S."/>
            <person name="Nusbaum C."/>
        </authorList>
    </citation>
    <scope>NUCLEOTIDE SEQUENCE [LARGE SCALE GENOMIC DNA]</scope>
</reference>
<reference key="4">
    <citation type="journal article" date="2004" name="Genome Res.">
        <title>The status, quality, and expansion of the NIH full-length cDNA project: the Mammalian Gene Collection (MGC).</title>
        <authorList>
            <consortium name="The MGC Project Team"/>
        </authorList>
    </citation>
    <scope>NUCLEOTIDE SEQUENCE [LARGE SCALE MRNA] (ISOFORMS 1 AND 2)</scope>
    <source>
        <tissue>B-cell</tissue>
    </source>
</reference>
<reference key="5">
    <citation type="journal article" date="2011" name="BMC Syst. Biol.">
        <title>Initial characterization of the human central proteome.</title>
        <authorList>
            <person name="Burkard T.R."/>
            <person name="Planyavsky M."/>
            <person name="Kaupe I."/>
            <person name="Breitwieser F.P."/>
            <person name="Buerckstuemmer T."/>
            <person name="Bennett K.L."/>
            <person name="Superti-Furga G."/>
            <person name="Colinge J."/>
        </authorList>
    </citation>
    <scope>IDENTIFICATION BY MASS SPECTROMETRY [LARGE SCALE ANALYSIS]</scope>
</reference>
<reference key="6">
    <citation type="journal article" date="2013" name="J. Proteome Res.">
        <title>Toward a comprehensive characterization of a human cancer cell phosphoproteome.</title>
        <authorList>
            <person name="Zhou H."/>
            <person name="Di Palma S."/>
            <person name="Preisinger C."/>
            <person name="Peng M."/>
            <person name="Polat A.N."/>
            <person name="Heck A.J."/>
            <person name="Mohammed S."/>
        </authorList>
    </citation>
    <scope>PHOSPHORYLATION [LARGE SCALE ANALYSIS] AT SER-139</scope>
    <scope>IDENTIFICATION BY MASS SPECTROMETRY [LARGE SCALE ANALYSIS]</scope>
    <source>
        <tissue>Erythroleukemia</tissue>
    </source>
</reference>
<reference key="7">
    <citation type="journal article" date="2014" name="J. Proteomics">
        <title>An enzyme assisted RP-RPLC approach for in-depth analysis of human liver phosphoproteome.</title>
        <authorList>
            <person name="Bian Y."/>
            <person name="Song C."/>
            <person name="Cheng K."/>
            <person name="Dong M."/>
            <person name="Wang F."/>
            <person name="Huang J."/>
            <person name="Sun D."/>
            <person name="Wang L."/>
            <person name="Ye M."/>
            <person name="Zou H."/>
        </authorList>
    </citation>
    <scope>IDENTIFICATION BY MASS SPECTROMETRY [LARGE SCALE ANALYSIS]</scope>
    <source>
        <tissue>Liver</tissue>
    </source>
</reference>
<reference key="8">
    <citation type="journal article" date="2002" name="Biochim. Biophys. Acta">
        <title>Human phosphatidylcholine transfer protein: purification, crystallization and preliminary X-ray diffraction data.</title>
        <authorList>
            <person name="Chan W.W."/>
            <person name="Roderick S.L."/>
            <person name="Cohen D.E."/>
        </authorList>
    </citation>
    <scope>X-RAY CRYSTALLOGRAPHY (2.4 ANGSTROMS)</scope>
</reference>
<reference key="9">
    <citation type="journal article" date="2002" name="Nat. Struct. Biol.">
        <title>Structure of human phosphatidylcholine transfer protein in complex with its ligand.</title>
        <authorList>
            <person name="Roderick S.L."/>
            <person name="Chan W.W."/>
            <person name="Agate D.S."/>
            <person name="Olsen L.R."/>
            <person name="Vetting M.W."/>
            <person name="Rajashankar K.R."/>
            <person name="Cohen D.E."/>
        </authorList>
    </citation>
    <scope>X-RAY CRYSTALLOGRAPHY (2.4 ANGSTROMS) IN COMPLEXES WITH PHOSPHATIDYLCHOLINE</scope>
    <scope>FUNCTION</scope>
    <scope>MUTAGENESIS OF CYS-63</scope>
</reference>
<gene>
    <name type="primary">PCTP</name>
    <name type="synonym">STARD2</name>
</gene>
<comment type="function">
    <text evidence="6">Catalyzes the transfer of phosphatidylcholine between membranes. Binds a single lipid molecule.</text>
</comment>
<comment type="subunit">
    <text evidence="1">Interacts with ACOT13/THEM2.</text>
</comment>
<comment type="interaction">
    <interactant intactId="EBI-4402391">
        <id>Q9UKL6</id>
    </interactant>
    <interactant intactId="EBI-741181">
        <id>Q6RW13</id>
        <label>AGTRAP</label>
    </interactant>
    <organismsDiffer>false</organismsDiffer>
    <experiments>3</experiments>
</comment>
<comment type="subcellular location">
    <subcellularLocation>
        <location evidence="3">Cytoplasm</location>
    </subcellularLocation>
</comment>
<comment type="alternative products">
    <event type="alternative splicing"/>
    <isoform>
        <id>Q9UKL6-1</id>
        <name>1</name>
        <sequence type="displayed"/>
    </isoform>
    <isoform>
        <id>Q9UKL6-2</id>
        <name>2</name>
        <sequence type="described" ref="VSP_041363"/>
    </isoform>
</comment>
<comment type="tissue specificity">
    <text evidence="5">Highest expression in liver, placenta, testis, kidney and heart. Low levels in brain and lung. No expression detected in thymus.</text>
</comment>
<comment type="sequence caution" evidence="8">
    <conflict type="erroneous initiation">
        <sequence resource="EMBL-CDS" id="AAH05112"/>
    </conflict>
    <text>Extended N-terminus.</text>
</comment>